<organism>
    <name type="scientific">Corynebacterium urealyticum (strain ATCC 43042 / DSM 7109)</name>
    <dbReference type="NCBI Taxonomy" id="504474"/>
    <lineage>
        <taxon>Bacteria</taxon>
        <taxon>Bacillati</taxon>
        <taxon>Actinomycetota</taxon>
        <taxon>Actinomycetes</taxon>
        <taxon>Mycobacteriales</taxon>
        <taxon>Corynebacteriaceae</taxon>
        <taxon>Corynebacterium</taxon>
    </lineage>
</organism>
<comment type="function">
    <text evidence="1">Produces ATP from ADP in the presence of a proton gradient across the membrane. The alpha chain is a regulatory subunit.</text>
</comment>
<comment type="catalytic activity">
    <reaction evidence="1">
        <text>ATP + H2O + 4 H(+)(in) = ADP + phosphate + 5 H(+)(out)</text>
        <dbReference type="Rhea" id="RHEA:57720"/>
        <dbReference type="ChEBI" id="CHEBI:15377"/>
        <dbReference type="ChEBI" id="CHEBI:15378"/>
        <dbReference type="ChEBI" id="CHEBI:30616"/>
        <dbReference type="ChEBI" id="CHEBI:43474"/>
        <dbReference type="ChEBI" id="CHEBI:456216"/>
        <dbReference type="EC" id="7.1.2.2"/>
    </reaction>
</comment>
<comment type="subunit">
    <text evidence="1">F-type ATPases have 2 components, CF(1) - the catalytic core - and CF(0) - the membrane proton channel. CF(1) has five subunits: alpha(3), beta(3), gamma(1), delta(1), epsilon(1). CF(0) has three main subunits: a(1), b(2) and c(9-12). The alpha and beta chains form an alternating ring which encloses part of the gamma chain. CF(1) is attached to CF(0) by a central stalk formed by the gamma and epsilon chains, while a peripheral stalk is formed by the delta and b chains.</text>
</comment>
<comment type="subcellular location">
    <subcellularLocation>
        <location evidence="1">Cell membrane</location>
        <topology evidence="1">Peripheral membrane protein</topology>
    </subcellularLocation>
</comment>
<comment type="similarity">
    <text evidence="1">Belongs to the ATPase alpha/beta chains family.</text>
</comment>
<protein>
    <recommendedName>
        <fullName evidence="1">ATP synthase subunit alpha</fullName>
        <ecNumber evidence="1">7.1.2.2</ecNumber>
    </recommendedName>
    <alternativeName>
        <fullName evidence="1">ATP synthase F1 sector subunit alpha</fullName>
    </alternativeName>
    <alternativeName>
        <fullName evidence="1">F-ATPase subunit alpha</fullName>
    </alternativeName>
</protein>
<sequence length="545" mass="59089">MAELTISSDEIRSAIANYTSSYSPEASREEVGVVTTAADGIANVSGMPSVMANELLEFPGGVIGVAQNLDTDSVGVVVLGNYETLKEGDEVKRTGEVLSIPVGENFLGRVINPLGEPIDGLGDITDTEERALELQAPSVLMRQPVNEPMQTGIKAIDAMTPIGRGQRQLIIGDRKTGKTSVCIDTILNQRDNWESGDPSKQVRCIYVAIGQKGSTIASIRQTLEEHGALEYTTIVAAPASDSAGFKWLAPFAGAALGQHWMYQGKHVLVIYDDLTKQAEAYRAISLLLRRPPGREAYPGDVFYLHSRLLERAAKLNDELGGGSLTALPIIETKANDVSAFIPTNVISITDGQVFLESDLFNQGVRPAINVGVSVSRVGGDAQTKGMKKVSGNLRLDLAAYRDLEAFSAFASDLDDASKAQLERGERLVELLKQTEHAPQSVEHQMISIWLAGEGEFDDVPVEDVRRFEAELIEHLRSNASGVFDQIAGGTPFTEESQAQLKQSTSEFKRGFQTTDGTPIIREPEARAMEQDEVKQSEITVTRKTV</sequence>
<accession>B1VFY5</accession>
<feature type="chain" id="PRO_1000143360" description="ATP synthase subunit alpha">
    <location>
        <begin position="1"/>
        <end position="545"/>
    </location>
</feature>
<feature type="binding site" evidence="1">
    <location>
        <begin position="172"/>
        <end position="179"/>
    </location>
    <ligand>
        <name>ATP</name>
        <dbReference type="ChEBI" id="CHEBI:30616"/>
    </ligand>
</feature>
<feature type="site" description="Required for activity" evidence="1">
    <location>
        <position position="373"/>
    </location>
</feature>
<evidence type="ECO:0000255" key="1">
    <source>
        <dbReference type="HAMAP-Rule" id="MF_01346"/>
    </source>
</evidence>
<dbReference type="EC" id="7.1.2.2" evidence="1"/>
<dbReference type="EMBL" id="AM942444">
    <property type="protein sequence ID" value="CAQ04674.1"/>
    <property type="molecule type" value="Genomic_DNA"/>
</dbReference>
<dbReference type="RefSeq" id="WP_012359965.1">
    <property type="nucleotide sequence ID" value="NC_010545.1"/>
</dbReference>
<dbReference type="SMR" id="B1VFY5"/>
<dbReference type="STRING" id="504474.cu0714"/>
<dbReference type="GeneID" id="60603490"/>
<dbReference type="KEGG" id="cur:cu0714"/>
<dbReference type="eggNOG" id="COG0056">
    <property type="taxonomic scope" value="Bacteria"/>
</dbReference>
<dbReference type="HOGENOM" id="CLU_010091_2_1_11"/>
<dbReference type="Proteomes" id="UP000001727">
    <property type="component" value="Chromosome"/>
</dbReference>
<dbReference type="GO" id="GO:0005886">
    <property type="term" value="C:plasma membrane"/>
    <property type="evidence" value="ECO:0007669"/>
    <property type="project" value="UniProtKB-SubCell"/>
</dbReference>
<dbReference type="GO" id="GO:0045259">
    <property type="term" value="C:proton-transporting ATP synthase complex"/>
    <property type="evidence" value="ECO:0007669"/>
    <property type="project" value="UniProtKB-KW"/>
</dbReference>
<dbReference type="GO" id="GO:0043531">
    <property type="term" value="F:ADP binding"/>
    <property type="evidence" value="ECO:0007669"/>
    <property type="project" value="TreeGrafter"/>
</dbReference>
<dbReference type="GO" id="GO:0005524">
    <property type="term" value="F:ATP binding"/>
    <property type="evidence" value="ECO:0007669"/>
    <property type="project" value="UniProtKB-UniRule"/>
</dbReference>
<dbReference type="GO" id="GO:0046933">
    <property type="term" value="F:proton-transporting ATP synthase activity, rotational mechanism"/>
    <property type="evidence" value="ECO:0007669"/>
    <property type="project" value="UniProtKB-UniRule"/>
</dbReference>
<dbReference type="CDD" id="cd18113">
    <property type="entry name" value="ATP-synt_F1_alpha_C"/>
    <property type="match status" value="1"/>
</dbReference>
<dbReference type="CDD" id="cd18116">
    <property type="entry name" value="ATP-synt_F1_alpha_N"/>
    <property type="match status" value="1"/>
</dbReference>
<dbReference type="CDD" id="cd01132">
    <property type="entry name" value="F1-ATPase_alpha_CD"/>
    <property type="match status" value="1"/>
</dbReference>
<dbReference type="FunFam" id="1.20.150.20:FF:000001">
    <property type="entry name" value="ATP synthase subunit alpha"/>
    <property type="match status" value="1"/>
</dbReference>
<dbReference type="FunFam" id="3.40.50.300:FF:000002">
    <property type="entry name" value="ATP synthase subunit alpha"/>
    <property type="match status" value="1"/>
</dbReference>
<dbReference type="Gene3D" id="2.40.30.20">
    <property type="match status" value="1"/>
</dbReference>
<dbReference type="Gene3D" id="1.20.150.20">
    <property type="entry name" value="ATP synthase alpha/beta chain, C-terminal domain"/>
    <property type="match status" value="1"/>
</dbReference>
<dbReference type="Gene3D" id="3.40.50.300">
    <property type="entry name" value="P-loop containing nucleotide triphosphate hydrolases"/>
    <property type="match status" value="1"/>
</dbReference>
<dbReference type="HAMAP" id="MF_01346">
    <property type="entry name" value="ATP_synth_alpha_bact"/>
    <property type="match status" value="1"/>
</dbReference>
<dbReference type="InterPro" id="IPR023366">
    <property type="entry name" value="ATP_synth_asu-like_sf"/>
</dbReference>
<dbReference type="InterPro" id="IPR000793">
    <property type="entry name" value="ATP_synth_asu_C"/>
</dbReference>
<dbReference type="InterPro" id="IPR038376">
    <property type="entry name" value="ATP_synth_asu_C_sf"/>
</dbReference>
<dbReference type="InterPro" id="IPR033732">
    <property type="entry name" value="ATP_synth_F1_a_nt-bd_dom"/>
</dbReference>
<dbReference type="InterPro" id="IPR005294">
    <property type="entry name" value="ATP_synth_F1_asu"/>
</dbReference>
<dbReference type="InterPro" id="IPR020003">
    <property type="entry name" value="ATPase_a/bsu_AS"/>
</dbReference>
<dbReference type="InterPro" id="IPR004100">
    <property type="entry name" value="ATPase_F1/V1/A1_a/bsu_N"/>
</dbReference>
<dbReference type="InterPro" id="IPR036121">
    <property type="entry name" value="ATPase_F1/V1/A1_a/bsu_N_sf"/>
</dbReference>
<dbReference type="InterPro" id="IPR000194">
    <property type="entry name" value="ATPase_F1/V1/A1_a/bsu_nucl-bd"/>
</dbReference>
<dbReference type="InterPro" id="IPR027417">
    <property type="entry name" value="P-loop_NTPase"/>
</dbReference>
<dbReference type="NCBIfam" id="TIGR00962">
    <property type="entry name" value="atpA"/>
    <property type="match status" value="1"/>
</dbReference>
<dbReference type="NCBIfam" id="NF009884">
    <property type="entry name" value="PRK13343.1"/>
    <property type="match status" value="1"/>
</dbReference>
<dbReference type="PANTHER" id="PTHR48082">
    <property type="entry name" value="ATP SYNTHASE SUBUNIT ALPHA, MITOCHONDRIAL"/>
    <property type="match status" value="1"/>
</dbReference>
<dbReference type="PANTHER" id="PTHR48082:SF2">
    <property type="entry name" value="ATP SYNTHASE SUBUNIT ALPHA, MITOCHONDRIAL"/>
    <property type="match status" value="1"/>
</dbReference>
<dbReference type="Pfam" id="PF00006">
    <property type="entry name" value="ATP-synt_ab"/>
    <property type="match status" value="1"/>
</dbReference>
<dbReference type="Pfam" id="PF00306">
    <property type="entry name" value="ATP-synt_ab_C"/>
    <property type="match status" value="1"/>
</dbReference>
<dbReference type="Pfam" id="PF02874">
    <property type="entry name" value="ATP-synt_ab_N"/>
    <property type="match status" value="1"/>
</dbReference>
<dbReference type="SUPFAM" id="SSF47917">
    <property type="entry name" value="C-terminal domain of alpha and beta subunits of F1 ATP synthase"/>
    <property type="match status" value="1"/>
</dbReference>
<dbReference type="SUPFAM" id="SSF50615">
    <property type="entry name" value="N-terminal domain of alpha and beta subunits of F1 ATP synthase"/>
    <property type="match status" value="1"/>
</dbReference>
<dbReference type="SUPFAM" id="SSF52540">
    <property type="entry name" value="P-loop containing nucleoside triphosphate hydrolases"/>
    <property type="match status" value="1"/>
</dbReference>
<dbReference type="PROSITE" id="PS00152">
    <property type="entry name" value="ATPASE_ALPHA_BETA"/>
    <property type="match status" value="1"/>
</dbReference>
<keyword id="KW-0066">ATP synthesis</keyword>
<keyword id="KW-0067">ATP-binding</keyword>
<keyword id="KW-1003">Cell membrane</keyword>
<keyword id="KW-0139">CF(1)</keyword>
<keyword id="KW-0375">Hydrogen ion transport</keyword>
<keyword id="KW-0406">Ion transport</keyword>
<keyword id="KW-0472">Membrane</keyword>
<keyword id="KW-0547">Nucleotide-binding</keyword>
<keyword id="KW-1185">Reference proteome</keyword>
<keyword id="KW-1278">Translocase</keyword>
<keyword id="KW-0813">Transport</keyword>
<name>ATPA_CORU7</name>
<proteinExistence type="inferred from homology"/>
<reference key="1">
    <citation type="journal article" date="2008" name="J. Biotechnol.">
        <title>The lifestyle of Corynebacterium urealyticum derived from its complete genome sequence established by pyrosequencing.</title>
        <authorList>
            <person name="Tauch A."/>
            <person name="Trost E."/>
            <person name="Tilker A."/>
            <person name="Ludewig U."/>
            <person name="Schneiker S."/>
            <person name="Goesmann A."/>
            <person name="Arnold W."/>
            <person name="Bekel T."/>
            <person name="Brinkrolf K."/>
            <person name="Brune I."/>
            <person name="Goetker S."/>
            <person name="Kalinowski J."/>
            <person name="Kamp P.-B."/>
            <person name="Lobo F.P."/>
            <person name="Viehoever P."/>
            <person name="Weisshaar B."/>
            <person name="Soriano F."/>
            <person name="Droege M."/>
            <person name="Puehler A."/>
        </authorList>
    </citation>
    <scope>NUCLEOTIDE SEQUENCE [LARGE SCALE GENOMIC DNA]</scope>
    <source>
        <strain>ATCC 43042 / DSM 7109</strain>
    </source>
</reference>
<gene>
    <name evidence="1" type="primary">atpA</name>
    <name type="ordered locus">cu0714</name>
</gene>